<protein>
    <recommendedName>
        <fullName evidence="1">Phosphoribosylformylglycinamidine synthase subunit PurL</fullName>
        <shortName evidence="1">FGAM synthase</shortName>
        <ecNumber evidence="1">6.3.5.3</ecNumber>
    </recommendedName>
    <alternativeName>
        <fullName evidence="1">Formylglycinamide ribonucleotide amidotransferase subunit II</fullName>
        <shortName evidence="1">FGAR amidotransferase II</shortName>
        <shortName evidence="1">FGAR-AT II</shortName>
    </alternativeName>
    <alternativeName>
        <fullName evidence="1">Glutamine amidotransferase PurL</fullName>
    </alternativeName>
    <alternativeName>
        <fullName evidence="1">Phosphoribosylformylglycinamidine synthase subunit II</fullName>
    </alternativeName>
</protein>
<evidence type="ECO:0000255" key="1">
    <source>
        <dbReference type="HAMAP-Rule" id="MF_00420"/>
    </source>
</evidence>
<proteinExistence type="inferred from homology"/>
<reference key="1">
    <citation type="journal article" date="2006" name="J. Bacteriol.">
        <title>The Methanosarcina barkeri genome: comparative analysis with Methanosarcina acetivorans and Methanosarcina mazei reveals extensive rearrangement within methanosarcinal genomes.</title>
        <authorList>
            <person name="Maeder D.L."/>
            <person name="Anderson I."/>
            <person name="Brettin T.S."/>
            <person name="Bruce D.C."/>
            <person name="Gilna P."/>
            <person name="Han C.S."/>
            <person name="Lapidus A."/>
            <person name="Metcalf W.W."/>
            <person name="Saunders E."/>
            <person name="Tapia R."/>
            <person name="Sowers K.R."/>
        </authorList>
    </citation>
    <scope>NUCLEOTIDE SEQUENCE [LARGE SCALE GENOMIC DNA]</scope>
    <source>
        <strain>Fusaro / DSM 804</strain>
    </source>
</reference>
<organism>
    <name type="scientific">Methanosarcina barkeri (strain Fusaro / DSM 804)</name>
    <dbReference type="NCBI Taxonomy" id="269797"/>
    <lineage>
        <taxon>Archaea</taxon>
        <taxon>Methanobacteriati</taxon>
        <taxon>Methanobacteriota</taxon>
        <taxon>Stenosarchaea group</taxon>
        <taxon>Methanomicrobia</taxon>
        <taxon>Methanosarcinales</taxon>
        <taxon>Methanosarcinaceae</taxon>
        <taxon>Methanosarcina</taxon>
    </lineage>
</organism>
<keyword id="KW-0067">ATP-binding</keyword>
<keyword id="KW-0963">Cytoplasm</keyword>
<keyword id="KW-0436">Ligase</keyword>
<keyword id="KW-0460">Magnesium</keyword>
<keyword id="KW-0479">Metal-binding</keyword>
<keyword id="KW-0547">Nucleotide-binding</keyword>
<keyword id="KW-0658">Purine biosynthesis</keyword>
<name>PURL_METBF</name>
<dbReference type="EC" id="6.3.5.3" evidence="1"/>
<dbReference type="EMBL" id="CP000099">
    <property type="protein sequence ID" value="AAZ69517.1"/>
    <property type="molecule type" value="Genomic_DNA"/>
</dbReference>
<dbReference type="SMR" id="Q46F25"/>
<dbReference type="STRING" id="269797.Mbar_A0536"/>
<dbReference type="PaxDb" id="269797-Mbar_A0536"/>
<dbReference type="KEGG" id="mba:Mbar_A0536"/>
<dbReference type="eggNOG" id="arCOG00641">
    <property type="taxonomic scope" value="Archaea"/>
</dbReference>
<dbReference type="HOGENOM" id="CLU_003100_0_1_2"/>
<dbReference type="OrthoDB" id="8251at2157"/>
<dbReference type="UniPathway" id="UPA00074">
    <property type="reaction ID" value="UER00128"/>
</dbReference>
<dbReference type="GO" id="GO:0005737">
    <property type="term" value="C:cytoplasm"/>
    <property type="evidence" value="ECO:0007669"/>
    <property type="project" value="UniProtKB-SubCell"/>
</dbReference>
<dbReference type="GO" id="GO:0005524">
    <property type="term" value="F:ATP binding"/>
    <property type="evidence" value="ECO:0007669"/>
    <property type="project" value="UniProtKB-UniRule"/>
</dbReference>
<dbReference type="GO" id="GO:0000287">
    <property type="term" value="F:magnesium ion binding"/>
    <property type="evidence" value="ECO:0007669"/>
    <property type="project" value="UniProtKB-UniRule"/>
</dbReference>
<dbReference type="GO" id="GO:0004642">
    <property type="term" value="F:phosphoribosylformylglycinamidine synthase activity"/>
    <property type="evidence" value="ECO:0007669"/>
    <property type="project" value="UniProtKB-UniRule"/>
</dbReference>
<dbReference type="GO" id="GO:0006189">
    <property type="term" value="P:'de novo' IMP biosynthetic process"/>
    <property type="evidence" value="ECO:0007669"/>
    <property type="project" value="UniProtKB-UniRule"/>
</dbReference>
<dbReference type="CDD" id="cd02203">
    <property type="entry name" value="PurL_repeat1"/>
    <property type="match status" value="1"/>
</dbReference>
<dbReference type="CDD" id="cd02204">
    <property type="entry name" value="PurL_repeat2"/>
    <property type="match status" value="1"/>
</dbReference>
<dbReference type="FunFam" id="3.30.1330.10:FF:000004">
    <property type="entry name" value="Phosphoribosylformylglycinamidine synthase subunit PurL"/>
    <property type="match status" value="1"/>
</dbReference>
<dbReference type="Gene3D" id="3.90.650.10">
    <property type="entry name" value="PurM-like C-terminal domain"/>
    <property type="match status" value="2"/>
</dbReference>
<dbReference type="Gene3D" id="3.30.1330.10">
    <property type="entry name" value="PurM-like, N-terminal domain"/>
    <property type="match status" value="2"/>
</dbReference>
<dbReference type="HAMAP" id="MF_00420">
    <property type="entry name" value="PurL_2"/>
    <property type="match status" value="1"/>
</dbReference>
<dbReference type="InterPro" id="IPR010074">
    <property type="entry name" value="PRibForGlyAmidine_synth_PurL"/>
</dbReference>
<dbReference type="InterPro" id="IPR041609">
    <property type="entry name" value="PurL_linker"/>
</dbReference>
<dbReference type="InterPro" id="IPR010918">
    <property type="entry name" value="PurM-like_C_dom"/>
</dbReference>
<dbReference type="InterPro" id="IPR036676">
    <property type="entry name" value="PurM-like_C_sf"/>
</dbReference>
<dbReference type="InterPro" id="IPR016188">
    <property type="entry name" value="PurM-like_N"/>
</dbReference>
<dbReference type="InterPro" id="IPR036921">
    <property type="entry name" value="PurM-like_N_sf"/>
</dbReference>
<dbReference type="NCBIfam" id="TIGR01736">
    <property type="entry name" value="FGAM_synth_II"/>
    <property type="match status" value="1"/>
</dbReference>
<dbReference type="NCBIfam" id="NF002290">
    <property type="entry name" value="PRK01213.1"/>
    <property type="match status" value="1"/>
</dbReference>
<dbReference type="PANTHER" id="PTHR43555">
    <property type="entry name" value="PHOSPHORIBOSYLFORMYLGLYCINAMIDINE SYNTHASE SUBUNIT PURL"/>
    <property type="match status" value="1"/>
</dbReference>
<dbReference type="PANTHER" id="PTHR43555:SF1">
    <property type="entry name" value="PHOSPHORIBOSYLFORMYLGLYCINAMIDINE SYNTHASE SUBUNIT PURL"/>
    <property type="match status" value="1"/>
</dbReference>
<dbReference type="Pfam" id="PF00586">
    <property type="entry name" value="AIRS"/>
    <property type="match status" value="2"/>
</dbReference>
<dbReference type="Pfam" id="PF02769">
    <property type="entry name" value="AIRS_C"/>
    <property type="match status" value="2"/>
</dbReference>
<dbReference type="Pfam" id="PF18072">
    <property type="entry name" value="FGAR-AT_linker"/>
    <property type="match status" value="1"/>
</dbReference>
<dbReference type="PIRSF" id="PIRSF001587">
    <property type="entry name" value="FGAM_synthase_II"/>
    <property type="match status" value="1"/>
</dbReference>
<dbReference type="SUPFAM" id="SSF56042">
    <property type="entry name" value="PurM C-terminal domain-like"/>
    <property type="match status" value="2"/>
</dbReference>
<dbReference type="SUPFAM" id="SSF55326">
    <property type="entry name" value="PurM N-terminal domain-like"/>
    <property type="match status" value="2"/>
</dbReference>
<gene>
    <name evidence="1" type="primary">purL</name>
    <name type="ordered locus">Mbar_A0536</name>
</gene>
<feature type="chain" id="PRO_0000236675" description="Phosphoribosylformylglycinamidine synthase subunit PurL">
    <location>
        <begin position="1"/>
        <end position="715"/>
    </location>
</feature>
<feature type="active site" evidence="1">
    <location>
        <position position="33"/>
    </location>
</feature>
<feature type="active site" description="Proton acceptor" evidence="1">
    <location>
        <position position="79"/>
    </location>
</feature>
<feature type="binding site" evidence="1">
    <location>
        <position position="36"/>
    </location>
    <ligand>
        <name>ATP</name>
        <dbReference type="ChEBI" id="CHEBI:30616"/>
    </ligand>
</feature>
<feature type="binding site" evidence="1">
    <location>
        <position position="77"/>
    </location>
    <ligand>
        <name>Mg(2+)</name>
        <dbReference type="ChEBI" id="CHEBI:18420"/>
        <label>1</label>
    </ligand>
</feature>
<feature type="binding site" evidence="1">
    <location>
        <begin position="78"/>
        <end position="81"/>
    </location>
    <ligand>
        <name>substrate</name>
    </ligand>
</feature>
<feature type="binding site" evidence="1">
    <location>
        <position position="100"/>
    </location>
    <ligand>
        <name>substrate</name>
    </ligand>
</feature>
<feature type="binding site" evidence="1">
    <location>
        <position position="101"/>
    </location>
    <ligand>
        <name>Mg(2+)</name>
        <dbReference type="ChEBI" id="CHEBI:18420"/>
        <label>2</label>
    </ligand>
</feature>
<feature type="binding site" evidence="1">
    <location>
        <position position="225"/>
    </location>
    <ligand>
        <name>substrate</name>
    </ligand>
</feature>
<feature type="binding site" evidence="1">
    <location>
        <position position="253"/>
    </location>
    <ligand>
        <name>Mg(2+)</name>
        <dbReference type="ChEBI" id="CHEBI:18420"/>
        <label>2</label>
    </ligand>
</feature>
<feature type="binding site" evidence="1">
    <location>
        <begin position="297"/>
        <end position="299"/>
    </location>
    <ligand>
        <name>substrate</name>
    </ligand>
</feature>
<feature type="binding site" evidence="1">
    <location>
        <position position="476"/>
    </location>
    <ligand>
        <name>ATP</name>
        <dbReference type="ChEBI" id="CHEBI:30616"/>
    </ligand>
</feature>
<feature type="binding site" evidence="1">
    <location>
        <position position="513"/>
    </location>
    <ligand>
        <name>ATP</name>
        <dbReference type="ChEBI" id="CHEBI:30616"/>
    </ligand>
</feature>
<feature type="binding site" evidence="1">
    <location>
        <position position="514"/>
    </location>
    <ligand>
        <name>Mg(2+)</name>
        <dbReference type="ChEBI" id="CHEBI:18420"/>
        <label>1</label>
    </ligand>
</feature>
<feature type="binding site" evidence="1">
    <location>
        <position position="516"/>
    </location>
    <ligand>
        <name>substrate</name>
    </ligand>
</feature>
<comment type="function">
    <text evidence="1">Part of the phosphoribosylformylglycinamidine synthase complex involved in the purines biosynthetic pathway. Catalyzes the ATP-dependent conversion of formylglycinamide ribonucleotide (FGAR) and glutamine to yield formylglycinamidine ribonucleotide (FGAM) and glutamate. The FGAM synthase complex is composed of three subunits. PurQ produces an ammonia molecule by converting glutamine to glutamate. PurL transfers the ammonia molecule to FGAR to form FGAM in an ATP-dependent manner. PurS interacts with PurQ and PurL and is thought to assist in the transfer of the ammonia molecule from PurQ to PurL.</text>
</comment>
<comment type="catalytic activity">
    <reaction evidence="1">
        <text>N(2)-formyl-N(1)-(5-phospho-beta-D-ribosyl)glycinamide + L-glutamine + ATP + H2O = 2-formamido-N(1)-(5-O-phospho-beta-D-ribosyl)acetamidine + L-glutamate + ADP + phosphate + H(+)</text>
        <dbReference type="Rhea" id="RHEA:17129"/>
        <dbReference type="ChEBI" id="CHEBI:15377"/>
        <dbReference type="ChEBI" id="CHEBI:15378"/>
        <dbReference type="ChEBI" id="CHEBI:29985"/>
        <dbReference type="ChEBI" id="CHEBI:30616"/>
        <dbReference type="ChEBI" id="CHEBI:43474"/>
        <dbReference type="ChEBI" id="CHEBI:58359"/>
        <dbReference type="ChEBI" id="CHEBI:147286"/>
        <dbReference type="ChEBI" id="CHEBI:147287"/>
        <dbReference type="ChEBI" id="CHEBI:456216"/>
        <dbReference type="EC" id="6.3.5.3"/>
    </reaction>
</comment>
<comment type="pathway">
    <text evidence="1">Purine metabolism; IMP biosynthesis via de novo pathway; 5-amino-1-(5-phospho-D-ribosyl)imidazole from N(2)-formyl-N(1)-(5-phospho-D-ribosyl)glycinamide: step 1/2.</text>
</comment>
<comment type="subunit">
    <text evidence="1">Monomer. Part of the FGAM synthase complex composed of 1 PurL, 1 PurQ and 2 PurS subunits.</text>
</comment>
<comment type="subcellular location">
    <subcellularLocation>
        <location evidence="1">Cytoplasm</location>
    </subcellularLocation>
</comment>
<comment type="similarity">
    <text evidence="1">Belongs to the FGAMS family.</text>
</comment>
<accession>Q46F25</accession>
<sequence length="715" mass="76285">MLPEEDLKIIKKELGREPTLVEQGCFLNLWSEHCSYRSSAPLLKTFTSKGENVIIGPGDDAAIIKFDDGYVLAIGMESHNHPSYVDPYNGAATGIGGIVRDIISMGARPIALMDPLYFGPLDTPKNMFLFEQIIKGIAGYGNCIGVPVVNGETFFDRRYSGNPLVNVVAVGLCREEEVITARSQKAGNKLVLAGSSTGKDGLGGASFASRDLSESAEAEDRPSVQVGDPYTEKLVIEMTLEAMEKGYIKSCKDLGAAGLGGASAELAAKGGLGAHITADAVTQREPNMNAYEILLAESQERMVFEVAPEDVDAVLALVAKYDLNGAVVGYLTEKPNYTVEFKGEVVVDIPIDFLTGGAPTCEKSSVAPIPQVEEGKAPKTPEDLKAAFLKVISSYNIASKEWIYRQYDHEVQLRTVIKPGEDAGVLKITDKKGLVLSCGCQPRATLLDPYNGGKNVVIENAMNLAVKGADGLAIVNCLNFGNPDRPEIYWQLKNSVLGLGDGARELSIPVVGGNVSLYNESDEFKTAILPTPSIGIIGKVNFETPLPSSFFAKSGDAIILVGETTADMGGSEYYACFEALNAGKVPSVPKNAPEIIKAVIEAARSGKLSSAHDLSLGGIAAGLARMCRNSGAKVDLSEVSELKAEELLFSEAPARALLATSEPEAVLEILKDVPHMVIGKVEGNSLEVKGKDFEISLSLKEISDAYSSLTRFMMR</sequence>